<dbReference type="EMBL" id="AF426254">
    <property type="protein sequence ID" value="AAL29431.1"/>
    <property type="molecule type" value="mRNA"/>
</dbReference>
<dbReference type="EMBL" id="AC008261">
    <property type="protein sequence ID" value="AAF26166.1"/>
    <property type="status" value="ALT_SEQ"/>
    <property type="molecule type" value="Genomic_DNA"/>
</dbReference>
<dbReference type="EMBL" id="CP002686">
    <property type="protein sequence ID" value="AEE73605.1"/>
    <property type="molecule type" value="Genomic_DNA"/>
</dbReference>
<dbReference type="RefSeq" id="NP_001325618.1">
    <property type="nucleotide sequence ID" value="NM_001337310.1"/>
</dbReference>
<dbReference type="RefSeq" id="NP_186757.2">
    <property type="nucleotide sequence ID" value="NM_110973.3"/>
</dbReference>
<dbReference type="SMR" id="Q93WU7"/>
<dbReference type="BioGRID" id="6546">
    <property type="interactions" value="1"/>
</dbReference>
<dbReference type="STRING" id="3702.Q93WU7"/>
<dbReference type="PaxDb" id="3702-AT3G01080.1"/>
<dbReference type="ProteomicsDB" id="234417"/>
<dbReference type="EnsemblPlants" id="AT3G01080.1">
    <property type="protein sequence ID" value="AT3G01080.1"/>
    <property type="gene ID" value="AT3G01080"/>
</dbReference>
<dbReference type="GeneID" id="821213"/>
<dbReference type="Gramene" id="AT3G01080.1">
    <property type="protein sequence ID" value="AT3G01080.1"/>
    <property type="gene ID" value="AT3G01080"/>
</dbReference>
<dbReference type="KEGG" id="ath:AT3G01080"/>
<dbReference type="Araport" id="AT3G01080"/>
<dbReference type="TAIR" id="AT3G01080">
    <property type="gene designation" value="WRKY58"/>
</dbReference>
<dbReference type="eggNOG" id="ENOG502QTWW">
    <property type="taxonomic scope" value="Eukaryota"/>
</dbReference>
<dbReference type="HOGENOM" id="CLU_012086_7_0_1"/>
<dbReference type="InParanoid" id="Q93WU7"/>
<dbReference type="OrthoDB" id="2021103at2759"/>
<dbReference type="PRO" id="PR:Q93WU7"/>
<dbReference type="Proteomes" id="UP000006548">
    <property type="component" value="Chromosome 3"/>
</dbReference>
<dbReference type="ExpressionAtlas" id="Q93WU7">
    <property type="expression patterns" value="baseline and differential"/>
</dbReference>
<dbReference type="GO" id="GO:0005634">
    <property type="term" value="C:nucleus"/>
    <property type="evidence" value="ECO:0007669"/>
    <property type="project" value="UniProtKB-SubCell"/>
</dbReference>
<dbReference type="GO" id="GO:0003700">
    <property type="term" value="F:DNA-binding transcription factor activity"/>
    <property type="evidence" value="ECO:0000315"/>
    <property type="project" value="TAIR"/>
</dbReference>
<dbReference type="GO" id="GO:0043565">
    <property type="term" value="F:sequence-specific DNA binding"/>
    <property type="evidence" value="ECO:0007669"/>
    <property type="project" value="InterPro"/>
</dbReference>
<dbReference type="GO" id="GO:0031347">
    <property type="term" value="P:regulation of defense response"/>
    <property type="evidence" value="ECO:0000315"/>
    <property type="project" value="TAIR"/>
</dbReference>
<dbReference type="FunFam" id="2.20.25.80:FF:000006">
    <property type="entry name" value="WRKY transcription factor"/>
    <property type="match status" value="1"/>
</dbReference>
<dbReference type="FunFam" id="2.20.25.80:FF:000001">
    <property type="entry name" value="WRKY transcription factor 33"/>
    <property type="match status" value="1"/>
</dbReference>
<dbReference type="Gene3D" id="2.20.25.80">
    <property type="entry name" value="WRKY domain"/>
    <property type="match status" value="2"/>
</dbReference>
<dbReference type="InterPro" id="IPR003657">
    <property type="entry name" value="WRKY_dom"/>
</dbReference>
<dbReference type="InterPro" id="IPR036576">
    <property type="entry name" value="WRKY_dom_sf"/>
</dbReference>
<dbReference type="InterPro" id="IPR044810">
    <property type="entry name" value="WRKY_plant"/>
</dbReference>
<dbReference type="PANTHER" id="PTHR31221:SF130">
    <property type="entry name" value="WRKY TRANSCRIPTION FACTOR 3-RELATED"/>
    <property type="match status" value="1"/>
</dbReference>
<dbReference type="PANTHER" id="PTHR31221">
    <property type="entry name" value="WRKY TRANSCRIPTION FACTOR PROTEIN 1-RELATED"/>
    <property type="match status" value="1"/>
</dbReference>
<dbReference type="Pfam" id="PF03106">
    <property type="entry name" value="WRKY"/>
    <property type="match status" value="2"/>
</dbReference>
<dbReference type="SMART" id="SM00774">
    <property type="entry name" value="WRKY"/>
    <property type="match status" value="2"/>
</dbReference>
<dbReference type="SUPFAM" id="SSF118290">
    <property type="entry name" value="WRKY DNA-binding domain"/>
    <property type="match status" value="2"/>
</dbReference>
<dbReference type="PROSITE" id="PS50811">
    <property type="entry name" value="WRKY"/>
    <property type="match status" value="2"/>
</dbReference>
<name>WRK58_ARATH</name>
<gene>
    <name type="primary">WRKY58</name>
    <name type="ordered locus">At3g01080</name>
    <name type="ORF">T4P13.24</name>
</gene>
<comment type="function">
    <text evidence="1">Transcription factor. Interacts specifically with the W box (5'-(T)TGAC[CT]-3'), a frequently occurring elicitor-responsive cis-acting element (By similarity).</text>
</comment>
<comment type="subcellular location">
    <subcellularLocation>
        <location evidence="2">Nucleus</location>
    </subcellularLocation>
</comment>
<comment type="sequence caution" evidence="4">
    <conflict type="erroneous gene model prediction">
        <sequence resource="EMBL-CDS" id="AAF26166"/>
    </conflict>
</comment>
<reference key="1">
    <citation type="submission" date="2001-10" db="EMBL/GenBank/DDBJ databases">
        <title>Arabidopsis thaliana transcription factor WRKY58.</title>
        <authorList>
            <person name="Kushnir S."/>
            <person name="Ulker B."/>
            <person name="Somssich I.E."/>
        </authorList>
    </citation>
    <scope>NUCLEOTIDE SEQUENCE [MRNA]</scope>
    <source>
        <strain>cv. Columbia</strain>
        <tissue>Flower</tissue>
    </source>
</reference>
<reference key="2">
    <citation type="journal article" date="2000" name="Nature">
        <title>Sequence and analysis of chromosome 3 of the plant Arabidopsis thaliana.</title>
        <authorList>
            <person name="Salanoubat M."/>
            <person name="Lemcke K."/>
            <person name="Rieger M."/>
            <person name="Ansorge W."/>
            <person name="Unseld M."/>
            <person name="Fartmann B."/>
            <person name="Valle G."/>
            <person name="Bloecker H."/>
            <person name="Perez-Alonso M."/>
            <person name="Obermaier B."/>
            <person name="Delseny M."/>
            <person name="Boutry M."/>
            <person name="Grivell L.A."/>
            <person name="Mache R."/>
            <person name="Puigdomenech P."/>
            <person name="De Simone V."/>
            <person name="Choisne N."/>
            <person name="Artiguenave F."/>
            <person name="Robert C."/>
            <person name="Brottier P."/>
            <person name="Wincker P."/>
            <person name="Cattolico L."/>
            <person name="Weissenbach J."/>
            <person name="Saurin W."/>
            <person name="Quetier F."/>
            <person name="Schaefer M."/>
            <person name="Mueller-Auer S."/>
            <person name="Gabel C."/>
            <person name="Fuchs M."/>
            <person name="Benes V."/>
            <person name="Wurmbach E."/>
            <person name="Drzonek H."/>
            <person name="Erfle H."/>
            <person name="Jordan N."/>
            <person name="Bangert S."/>
            <person name="Wiedelmann R."/>
            <person name="Kranz H."/>
            <person name="Voss H."/>
            <person name="Holland R."/>
            <person name="Brandt P."/>
            <person name="Nyakatura G."/>
            <person name="Vezzi A."/>
            <person name="D'Angelo M."/>
            <person name="Pallavicini A."/>
            <person name="Toppo S."/>
            <person name="Simionati B."/>
            <person name="Conrad A."/>
            <person name="Hornischer K."/>
            <person name="Kauer G."/>
            <person name="Loehnert T.-H."/>
            <person name="Nordsiek G."/>
            <person name="Reichelt J."/>
            <person name="Scharfe M."/>
            <person name="Schoen O."/>
            <person name="Bargues M."/>
            <person name="Terol J."/>
            <person name="Climent J."/>
            <person name="Navarro P."/>
            <person name="Collado C."/>
            <person name="Perez-Perez A."/>
            <person name="Ottenwaelder B."/>
            <person name="Duchemin D."/>
            <person name="Cooke R."/>
            <person name="Laudie M."/>
            <person name="Berger-Llauro C."/>
            <person name="Purnelle B."/>
            <person name="Masuy D."/>
            <person name="de Haan M."/>
            <person name="Maarse A.C."/>
            <person name="Alcaraz J.-P."/>
            <person name="Cottet A."/>
            <person name="Casacuberta E."/>
            <person name="Monfort A."/>
            <person name="Argiriou A."/>
            <person name="Flores M."/>
            <person name="Liguori R."/>
            <person name="Vitale D."/>
            <person name="Mannhaupt G."/>
            <person name="Haase D."/>
            <person name="Schoof H."/>
            <person name="Rudd S."/>
            <person name="Zaccaria P."/>
            <person name="Mewes H.-W."/>
            <person name="Mayer K.F.X."/>
            <person name="Kaul S."/>
            <person name="Town C.D."/>
            <person name="Koo H.L."/>
            <person name="Tallon L.J."/>
            <person name="Jenkins J."/>
            <person name="Rooney T."/>
            <person name="Rizzo M."/>
            <person name="Walts A."/>
            <person name="Utterback T."/>
            <person name="Fujii C.Y."/>
            <person name="Shea T.P."/>
            <person name="Creasy T.H."/>
            <person name="Haas B."/>
            <person name="Maiti R."/>
            <person name="Wu D."/>
            <person name="Peterson J."/>
            <person name="Van Aken S."/>
            <person name="Pai G."/>
            <person name="Militscher J."/>
            <person name="Sellers P."/>
            <person name="Gill J.E."/>
            <person name="Feldblyum T.V."/>
            <person name="Preuss D."/>
            <person name="Lin X."/>
            <person name="Nierman W.C."/>
            <person name="Salzberg S.L."/>
            <person name="White O."/>
            <person name="Venter J.C."/>
            <person name="Fraser C.M."/>
            <person name="Kaneko T."/>
            <person name="Nakamura Y."/>
            <person name="Sato S."/>
            <person name="Kato T."/>
            <person name="Asamizu E."/>
            <person name="Sasamoto S."/>
            <person name="Kimura T."/>
            <person name="Idesawa K."/>
            <person name="Kawashima K."/>
            <person name="Kishida Y."/>
            <person name="Kiyokawa C."/>
            <person name="Kohara M."/>
            <person name="Matsumoto M."/>
            <person name="Matsuno A."/>
            <person name="Muraki A."/>
            <person name="Nakayama S."/>
            <person name="Nakazaki N."/>
            <person name="Shinpo S."/>
            <person name="Takeuchi C."/>
            <person name="Wada T."/>
            <person name="Watanabe A."/>
            <person name="Yamada M."/>
            <person name="Yasuda M."/>
            <person name="Tabata S."/>
        </authorList>
    </citation>
    <scope>NUCLEOTIDE SEQUENCE [LARGE SCALE GENOMIC DNA]</scope>
    <source>
        <strain>cv. Columbia</strain>
    </source>
</reference>
<reference key="3">
    <citation type="journal article" date="2017" name="Plant J.">
        <title>Araport11: a complete reannotation of the Arabidopsis thaliana reference genome.</title>
        <authorList>
            <person name="Cheng C.Y."/>
            <person name="Krishnakumar V."/>
            <person name="Chan A.P."/>
            <person name="Thibaud-Nissen F."/>
            <person name="Schobel S."/>
            <person name="Town C.D."/>
        </authorList>
    </citation>
    <scope>GENOME REANNOTATION</scope>
    <source>
        <strain>cv. Columbia</strain>
    </source>
</reference>
<evidence type="ECO:0000250" key="1"/>
<evidence type="ECO:0000255" key="2">
    <source>
        <dbReference type="PROSITE-ProRule" id="PRU00223"/>
    </source>
</evidence>
<evidence type="ECO:0000256" key="3">
    <source>
        <dbReference type="SAM" id="MobiDB-lite"/>
    </source>
</evidence>
<evidence type="ECO:0000305" key="4"/>
<proteinExistence type="evidence at transcript level"/>
<sequence>MAVEDDVSLIRTTTLVAPTRPTITVPHRPPAIETAAYFFGGGDGLSLSPGPLSFVSSLFVDNFPDVLTPDNQRTTSFTHLLTSPMFFPPQSSAHTGFIQPRQQSQPQPQRPDTFPHHMPPSTSVAVHGRQSLDVSQVDQRARNHYNNPGNNNNNRSYNVVNVDKPADDGYNWRKYGQKPIKGCEYPRSYYKCTHVNCPVKKKVERSSDGQITQIIYKGQHDHERPQNRRGGGGRDSTEVGGAGQMMESSDDSGYRKDHDDDDDDDEDDEDLPASKIRRIDGVSTTHRTVTEPKIIVQTKSEVDLLDDGYRWRKYGQKVVKGNPHPRSYYKCTTPNCTVRKHVERASTDAKAVITTYEGKHNHDVPAARNGTAAATAAAVGPSDHHRMRSMSGNNMQQHMSFGNNNNTGQSPVLLRLKEEKITI</sequence>
<organism>
    <name type="scientific">Arabidopsis thaliana</name>
    <name type="common">Mouse-ear cress</name>
    <dbReference type="NCBI Taxonomy" id="3702"/>
    <lineage>
        <taxon>Eukaryota</taxon>
        <taxon>Viridiplantae</taxon>
        <taxon>Streptophyta</taxon>
        <taxon>Embryophyta</taxon>
        <taxon>Tracheophyta</taxon>
        <taxon>Spermatophyta</taxon>
        <taxon>Magnoliopsida</taxon>
        <taxon>eudicotyledons</taxon>
        <taxon>Gunneridae</taxon>
        <taxon>Pentapetalae</taxon>
        <taxon>rosids</taxon>
        <taxon>malvids</taxon>
        <taxon>Brassicales</taxon>
        <taxon>Brassicaceae</taxon>
        <taxon>Camelineae</taxon>
        <taxon>Arabidopsis</taxon>
    </lineage>
</organism>
<feature type="chain" id="PRO_0000133699" description="Probable WRKY transcription factor 58">
    <location>
        <begin position="1"/>
        <end position="423"/>
    </location>
</feature>
<feature type="DNA-binding region" description="WRKY 1" evidence="2">
    <location>
        <begin position="161"/>
        <end position="225"/>
    </location>
</feature>
<feature type="DNA-binding region" description="WRKY 2" evidence="2">
    <location>
        <begin position="300"/>
        <end position="365"/>
    </location>
</feature>
<feature type="region of interest" description="Disordered" evidence="3">
    <location>
        <begin position="91"/>
        <end position="128"/>
    </location>
</feature>
<feature type="region of interest" description="Disordered" evidence="3">
    <location>
        <begin position="142"/>
        <end position="171"/>
    </location>
</feature>
<feature type="region of interest" description="Disordered" evidence="3">
    <location>
        <begin position="215"/>
        <end position="284"/>
    </location>
</feature>
<feature type="compositionally biased region" description="Low complexity" evidence="3">
    <location>
        <begin position="99"/>
        <end position="111"/>
    </location>
</feature>
<feature type="compositionally biased region" description="Low complexity" evidence="3">
    <location>
        <begin position="144"/>
        <end position="162"/>
    </location>
</feature>
<feature type="compositionally biased region" description="Acidic residues" evidence="3">
    <location>
        <begin position="259"/>
        <end position="271"/>
    </location>
</feature>
<feature type="sequence conflict" description="In Ref. 1; AAL29431." evidence="4" ref="1">
    <original>H</original>
    <variation>Q</variation>
    <location>
        <position position="79"/>
    </location>
</feature>
<keyword id="KW-0238">DNA-binding</keyword>
<keyword id="KW-0539">Nucleus</keyword>
<keyword id="KW-1185">Reference proteome</keyword>
<keyword id="KW-0677">Repeat</keyword>
<keyword id="KW-0804">Transcription</keyword>
<keyword id="KW-0805">Transcription regulation</keyword>
<protein>
    <recommendedName>
        <fullName>Probable WRKY transcription factor 58</fullName>
    </recommendedName>
    <alternativeName>
        <fullName>WRKY DNA-binding protein 58</fullName>
    </alternativeName>
</protein>
<accession>Q93WU7</accession>
<accession>Q9MAC2</accession>